<comment type="similarity">
    <text evidence="5">Belongs to the TRAFAC class myosin-kinesin ATPase superfamily. Kinesin family. KIN-14 subfamily.</text>
</comment>
<proteinExistence type="evidence at transcript level"/>
<reference key="1">
    <citation type="journal article" date="2002" name="Nature">
        <title>The genome sequence and structure of rice chromosome 1.</title>
        <authorList>
            <person name="Sasaki T."/>
            <person name="Matsumoto T."/>
            <person name="Yamamoto K."/>
            <person name="Sakata K."/>
            <person name="Baba T."/>
            <person name="Katayose Y."/>
            <person name="Wu J."/>
            <person name="Niimura Y."/>
            <person name="Cheng Z."/>
            <person name="Nagamura Y."/>
            <person name="Antonio B.A."/>
            <person name="Kanamori H."/>
            <person name="Hosokawa S."/>
            <person name="Masukawa M."/>
            <person name="Arikawa K."/>
            <person name="Chiden Y."/>
            <person name="Hayashi M."/>
            <person name="Okamoto M."/>
            <person name="Ando T."/>
            <person name="Aoki H."/>
            <person name="Arita K."/>
            <person name="Hamada M."/>
            <person name="Harada C."/>
            <person name="Hijishita S."/>
            <person name="Honda M."/>
            <person name="Ichikawa Y."/>
            <person name="Idonuma A."/>
            <person name="Iijima M."/>
            <person name="Ikeda M."/>
            <person name="Ikeno M."/>
            <person name="Ito S."/>
            <person name="Ito T."/>
            <person name="Ito Y."/>
            <person name="Ito Y."/>
            <person name="Iwabuchi A."/>
            <person name="Kamiya K."/>
            <person name="Karasawa W."/>
            <person name="Katagiri S."/>
            <person name="Kikuta A."/>
            <person name="Kobayashi N."/>
            <person name="Kono I."/>
            <person name="Machita K."/>
            <person name="Maehara T."/>
            <person name="Mizuno H."/>
            <person name="Mizubayashi T."/>
            <person name="Mukai Y."/>
            <person name="Nagasaki H."/>
            <person name="Nakashima M."/>
            <person name="Nakama Y."/>
            <person name="Nakamichi Y."/>
            <person name="Nakamura M."/>
            <person name="Namiki N."/>
            <person name="Negishi M."/>
            <person name="Ohta I."/>
            <person name="Ono N."/>
            <person name="Saji S."/>
            <person name="Sakai K."/>
            <person name="Shibata M."/>
            <person name="Shimokawa T."/>
            <person name="Shomura A."/>
            <person name="Song J."/>
            <person name="Takazaki Y."/>
            <person name="Terasawa K."/>
            <person name="Tsuji K."/>
            <person name="Waki K."/>
            <person name="Yamagata H."/>
            <person name="Yamane H."/>
            <person name="Yoshiki S."/>
            <person name="Yoshihara R."/>
            <person name="Yukawa K."/>
            <person name="Zhong H."/>
            <person name="Iwama H."/>
            <person name="Endo T."/>
            <person name="Ito H."/>
            <person name="Hahn J.H."/>
            <person name="Kim H.-I."/>
            <person name="Eun M.-Y."/>
            <person name="Yano M."/>
            <person name="Jiang J."/>
            <person name="Gojobori T."/>
        </authorList>
    </citation>
    <scope>NUCLEOTIDE SEQUENCE [LARGE SCALE GENOMIC DNA]</scope>
    <source>
        <strain>cv. Nipponbare</strain>
    </source>
</reference>
<reference key="2">
    <citation type="journal article" date="2005" name="Nature">
        <title>The map-based sequence of the rice genome.</title>
        <authorList>
            <consortium name="International rice genome sequencing project (IRGSP)"/>
        </authorList>
    </citation>
    <scope>NUCLEOTIDE SEQUENCE [LARGE SCALE GENOMIC DNA]</scope>
    <source>
        <strain>cv. Nipponbare</strain>
    </source>
</reference>
<reference key="3">
    <citation type="journal article" date="2008" name="Nucleic Acids Res.">
        <title>The rice annotation project database (RAP-DB): 2008 update.</title>
        <authorList>
            <consortium name="The rice annotation project (RAP)"/>
        </authorList>
    </citation>
    <scope>GENOME REANNOTATION</scope>
    <source>
        <strain>cv. Nipponbare</strain>
    </source>
</reference>
<reference key="4">
    <citation type="journal article" date="2013" name="Rice">
        <title>Improvement of the Oryza sativa Nipponbare reference genome using next generation sequence and optical map data.</title>
        <authorList>
            <person name="Kawahara Y."/>
            <person name="de la Bastide M."/>
            <person name="Hamilton J.P."/>
            <person name="Kanamori H."/>
            <person name="McCombie W.R."/>
            <person name="Ouyang S."/>
            <person name="Schwartz D.C."/>
            <person name="Tanaka T."/>
            <person name="Wu J."/>
            <person name="Zhou S."/>
            <person name="Childs K.L."/>
            <person name="Davidson R.M."/>
            <person name="Lin H."/>
            <person name="Quesada-Ocampo L."/>
            <person name="Vaillancourt B."/>
            <person name="Sakai H."/>
            <person name="Lee S.S."/>
            <person name="Kim J."/>
            <person name="Numa H."/>
            <person name="Itoh T."/>
            <person name="Buell C.R."/>
            <person name="Matsumoto T."/>
        </authorList>
    </citation>
    <scope>GENOME REANNOTATION</scope>
    <source>
        <strain>cv. Nipponbare</strain>
    </source>
</reference>
<reference key="5">
    <citation type="journal article" date="2003" name="Science">
        <title>Collection, mapping, and annotation of over 28,000 cDNA clones from japonica rice.</title>
        <authorList>
            <consortium name="The rice full-length cDNA consortium"/>
        </authorList>
    </citation>
    <scope>NUCLEOTIDE SEQUENCE [LARGE SCALE MRNA]</scope>
    <source>
        <strain>cv. Nipponbare</strain>
    </source>
</reference>
<reference key="6">
    <citation type="journal article" date="2009" name="Ann. Bot.">
        <title>Evaluating the microtubule cytoskeleton and its interacting proteins in monocots by mining the rice genome.</title>
        <authorList>
            <person name="Guo L."/>
            <person name="Ho C.M."/>
            <person name="Kong Z."/>
            <person name="Lee Y.R."/>
            <person name="Qian Q."/>
            <person name="Liu B."/>
        </authorList>
    </citation>
    <scope>GENE FAMILY</scope>
    <scope>NOMENCLATURE</scope>
</reference>
<organism>
    <name type="scientific">Oryza sativa subsp. japonica</name>
    <name type="common">Rice</name>
    <dbReference type="NCBI Taxonomy" id="39947"/>
    <lineage>
        <taxon>Eukaryota</taxon>
        <taxon>Viridiplantae</taxon>
        <taxon>Streptophyta</taxon>
        <taxon>Embryophyta</taxon>
        <taxon>Tracheophyta</taxon>
        <taxon>Spermatophyta</taxon>
        <taxon>Magnoliopsida</taxon>
        <taxon>Liliopsida</taxon>
        <taxon>Poales</taxon>
        <taxon>Poaceae</taxon>
        <taxon>BOP clade</taxon>
        <taxon>Oryzoideae</taxon>
        <taxon>Oryzeae</taxon>
        <taxon>Oryzinae</taxon>
        <taxon>Oryza</taxon>
        <taxon>Oryza sativa</taxon>
    </lineage>
</organism>
<keyword id="KW-0067">ATP-binding</keyword>
<keyword id="KW-0175">Coiled coil</keyword>
<keyword id="KW-0493">Microtubule</keyword>
<keyword id="KW-0505">Motor protein</keyword>
<keyword id="KW-0547">Nucleotide-binding</keyword>
<keyword id="KW-1185">Reference proteome</keyword>
<feature type="chain" id="PRO_0000438629" description="Kinesin-like protein KIN-14C">
    <location>
        <begin position="1"/>
        <end position="971"/>
    </location>
</feature>
<feature type="domain" description="Calponin-homology (CH)" evidence="2">
    <location>
        <begin position="14"/>
        <end position="119"/>
    </location>
</feature>
<feature type="domain" description="Kinesin motor" evidence="3">
    <location>
        <begin position="472"/>
        <end position="799"/>
    </location>
</feature>
<feature type="region of interest" description="Disordered" evidence="4">
    <location>
        <begin position="839"/>
        <end position="971"/>
    </location>
</feature>
<feature type="coiled-coil region" evidence="1">
    <location>
        <begin position="272"/>
        <end position="357"/>
    </location>
</feature>
<feature type="coiled-coil region" evidence="1">
    <location>
        <begin position="809"/>
        <end position="844"/>
    </location>
</feature>
<feature type="compositionally biased region" description="Polar residues" evidence="4">
    <location>
        <begin position="839"/>
        <end position="881"/>
    </location>
</feature>
<feature type="binding site" evidence="3">
    <location>
        <begin position="556"/>
        <end position="563"/>
    </location>
    <ligand>
        <name>ATP</name>
        <dbReference type="ChEBI" id="CHEBI:30616"/>
    </ligand>
</feature>
<feature type="sequence conflict" description="In Ref. 5; AK101026." evidence="6" ref="5">
    <original>F</original>
    <variation>L</variation>
    <location>
        <position position="773"/>
    </location>
</feature>
<feature type="sequence conflict" description="In Ref. 5; AK101026." evidence="6" ref="5">
    <original>F</original>
    <variation>L</variation>
    <location>
        <position position="792"/>
    </location>
</feature>
<protein>
    <recommendedName>
        <fullName evidence="6">Kinesin-like protein KIN-14C</fullName>
    </recommendedName>
</protein>
<dbReference type="EMBL" id="AP003376">
    <property type="protein sequence ID" value="BAD87516.1"/>
    <property type="molecule type" value="Genomic_DNA"/>
</dbReference>
<dbReference type="EMBL" id="AP003768">
    <property type="protein sequence ID" value="BAD87915.1"/>
    <property type="molecule type" value="Genomic_DNA"/>
</dbReference>
<dbReference type="EMBL" id="AP008207">
    <property type="protein sequence ID" value="BAF06136.1"/>
    <property type="molecule type" value="Genomic_DNA"/>
</dbReference>
<dbReference type="EMBL" id="AP014957">
    <property type="protein sequence ID" value="BAS74302.1"/>
    <property type="molecule type" value="Genomic_DNA"/>
</dbReference>
<dbReference type="EMBL" id="AK101026">
    <property type="status" value="NOT_ANNOTATED_CDS"/>
    <property type="molecule type" value="mRNA"/>
</dbReference>
<dbReference type="RefSeq" id="XP_015651185.1">
    <property type="nucleotide sequence ID" value="XM_015795699.1"/>
</dbReference>
<dbReference type="SMR" id="Q5JKW1"/>
<dbReference type="FunCoup" id="Q5JKW1">
    <property type="interactions" value="60"/>
</dbReference>
<dbReference type="STRING" id="39947.Q5JKW1"/>
<dbReference type="PaxDb" id="39947-Q5JKW1"/>
<dbReference type="EnsemblPlants" id="Os01t0744000-01">
    <property type="protein sequence ID" value="Os01t0744000-01"/>
    <property type="gene ID" value="Os01g0744000"/>
</dbReference>
<dbReference type="Gramene" id="Os01t0744000-01">
    <property type="protein sequence ID" value="Os01t0744000-01"/>
    <property type="gene ID" value="Os01g0744000"/>
</dbReference>
<dbReference type="KEGG" id="dosa:Os01g0744000"/>
<dbReference type="eggNOG" id="KOG0239">
    <property type="taxonomic scope" value="Eukaryota"/>
</dbReference>
<dbReference type="HOGENOM" id="CLU_001485_1_3_1"/>
<dbReference type="InParanoid" id="Q5JKW1"/>
<dbReference type="OMA" id="HEERCLE"/>
<dbReference type="OrthoDB" id="3176171at2759"/>
<dbReference type="Proteomes" id="UP000000763">
    <property type="component" value="Chromosome 1"/>
</dbReference>
<dbReference type="Proteomes" id="UP000059680">
    <property type="component" value="Chromosome 1"/>
</dbReference>
<dbReference type="ExpressionAtlas" id="Q5JKW1">
    <property type="expression patterns" value="baseline and differential"/>
</dbReference>
<dbReference type="GO" id="GO:0005874">
    <property type="term" value="C:microtubule"/>
    <property type="evidence" value="ECO:0007669"/>
    <property type="project" value="UniProtKB-KW"/>
</dbReference>
<dbReference type="GO" id="GO:0015630">
    <property type="term" value="C:microtubule cytoskeleton"/>
    <property type="evidence" value="ECO:0000318"/>
    <property type="project" value="GO_Central"/>
</dbReference>
<dbReference type="GO" id="GO:0005524">
    <property type="term" value="F:ATP binding"/>
    <property type="evidence" value="ECO:0007669"/>
    <property type="project" value="UniProtKB-KW"/>
</dbReference>
<dbReference type="GO" id="GO:0008017">
    <property type="term" value="F:microtubule binding"/>
    <property type="evidence" value="ECO:0000318"/>
    <property type="project" value="GO_Central"/>
</dbReference>
<dbReference type="GO" id="GO:0003777">
    <property type="term" value="F:microtubule motor activity"/>
    <property type="evidence" value="ECO:0007669"/>
    <property type="project" value="InterPro"/>
</dbReference>
<dbReference type="GO" id="GO:0007018">
    <property type="term" value="P:microtubule-based movement"/>
    <property type="evidence" value="ECO:0007669"/>
    <property type="project" value="InterPro"/>
</dbReference>
<dbReference type="GO" id="GO:0007017">
    <property type="term" value="P:microtubule-based process"/>
    <property type="evidence" value="ECO:0000318"/>
    <property type="project" value="GO_Central"/>
</dbReference>
<dbReference type="FunFam" id="3.40.850.10:FF:000178">
    <property type="entry name" value="Kinesin-related protein3"/>
    <property type="match status" value="1"/>
</dbReference>
<dbReference type="FunFam" id="1.10.418.10:FF:000065">
    <property type="entry name" value="p-loop nucleoside triphosphate hydrolase superfamily protein with CH (Calponin Homology) domain"/>
    <property type="match status" value="1"/>
</dbReference>
<dbReference type="FunFam" id="3.40.850.10:FF:000111">
    <property type="entry name" value="p-loop nucleoside triphosphate hydrolase superfamily protein with CH (Calponin Homology) domain"/>
    <property type="match status" value="1"/>
</dbReference>
<dbReference type="Gene3D" id="1.10.418.10">
    <property type="entry name" value="Calponin-like domain"/>
    <property type="match status" value="1"/>
</dbReference>
<dbReference type="Gene3D" id="3.40.850.10">
    <property type="entry name" value="Kinesin motor domain"/>
    <property type="match status" value="1"/>
</dbReference>
<dbReference type="InterPro" id="IPR001715">
    <property type="entry name" value="CH_dom"/>
</dbReference>
<dbReference type="InterPro" id="IPR036872">
    <property type="entry name" value="CH_dom_sf"/>
</dbReference>
<dbReference type="InterPro" id="IPR027640">
    <property type="entry name" value="Kinesin-like_fam"/>
</dbReference>
<dbReference type="InterPro" id="IPR001752">
    <property type="entry name" value="Kinesin_motor_dom"/>
</dbReference>
<dbReference type="InterPro" id="IPR036961">
    <property type="entry name" value="Kinesin_motor_dom_sf"/>
</dbReference>
<dbReference type="InterPro" id="IPR027417">
    <property type="entry name" value="P-loop_NTPase"/>
</dbReference>
<dbReference type="PANTHER" id="PTHR47972:SF64">
    <property type="entry name" value="KINESIN-LIKE PROTEIN KIN-14C"/>
    <property type="match status" value="1"/>
</dbReference>
<dbReference type="PANTHER" id="PTHR47972">
    <property type="entry name" value="KINESIN-LIKE PROTEIN KLP-3"/>
    <property type="match status" value="1"/>
</dbReference>
<dbReference type="Pfam" id="PF00307">
    <property type="entry name" value="CH"/>
    <property type="match status" value="1"/>
</dbReference>
<dbReference type="Pfam" id="PF00225">
    <property type="entry name" value="Kinesin"/>
    <property type="match status" value="1"/>
</dbReference>
<dbReference type="PRINTS" id="PR00380">
    <property type="entry name" value="KINESINHEAVY"/>
</dbReference>
<dbReference type="SMART" id="SM00033">
    <property type="entry name" value="CH"/>
    <property type="match status" value="1"/>
</dbReference>
<dbReference type="SMART" id="SM00129">
    <property type="entry name" value="KISc"/>
    <property type="match status" value="1"/>
</dbReference>
<dbReference type="SUPFAM" id="SSF47576">
    <property type="entry name" value="Calponin-homology domain, CH-domain"/>
    <property type="match status" value="1"/>
</dbReference>
<dbReference type="SUPFAM" id="SSF52540">
    <property type="entry name" value="P-loop containing nucleoside triphosphate hydrolases"/>
    <property type="match status" value="1"/>
</dbReference>
<dbReference type="PROSITE" id="PS50021">
    <property type="entry name" value="CH"/>
    <property type="match status" value="1"/>
</dbReference>
<dbReference type="PROSITE" id="PS50067">
    <property type="entry name" value="KINESIN_MOTOR_2"/>
    <property type="match status" value="1"/>
</dbReference>
<name>KN14C_ORYSJ</name>
<gene>
    <name evidence="6" type="primary">KIN14C</name>
    <name evidence="9" type="ordered locus">Os01g0744000</name>
    <name evidence="6" type="ordered locus">LOC_Os01g54080</name>
    <name evidence="7" type="ORF">OSJNBa0014K08.6</name>
    <name evidence="8" type="ORF">P0439E07.39</name>
</gene>
<sequence>MGTVNGEYEDFDAANRRAEVIDWLGGLLPEFDLPLDSSDEELRDYLINGEALCYVADKLMPGVLEGTWGGYASDQRSNVKKFLSVVAEMGLPGFGVKDLEEGSMSSIVECLLALKDNVATQLGGHISNSTAKTPIRRKLELRETDGPVLSVATPGKRYPKSQQRSPLLSGQKINEVVQFKHGTYTDLPAAKISEMLHSNSLDNAPTQSLLRVVNGILDESIERKRGEIPHRVVHLLRNVIQEIEHRIGIQADHIRNQNSIIKTREDKYRSKIKALETLVNGTNEENEMAINRLEVVKVEKSKIDEKRKLGEQDMIRLIREKENAENIIASLHQEMQVMNRMHEQFREQMETKARQMEEHLTLRAKEAEFCLMQSKKKVEEVEATSQLKSQLWSKKANIFQSFMNNQKLSIKDIKISSQSIKQEMYALQMTWRDEISNIGHDLKGLVDAAENYHKVLAENQKLFNEVQELKGNIRVYCRVRPFLPGQDGKLTAIDYIGENGEILIANPSKQGKEGYRMFKFNKVFGTHSSQAEVFSDIQPLIRSVLDGFNVCIFAYGQTGSGKTYTMSGPGTSREDWGVNYRALNDLFDISLSRKNAFSYEVGVQMVEIYNEQVRDLLSNDIAQKRLGIWSTSQPNGLVVPDASLHPVKSTSDVLDLMEIGQSNRAVGSTALNERSSRSHSILTVHVRGLDVKNGSTSRGCLHLIDLAGSERVERSEATGDRLKEAQHINKSLSALGDVIFSLAQKNAHVPYRNSKLTQVLQSSLGGQAKTLMFVQINPDIESYSETISTLKFAERVSGVELGAARSNREGKDIKELLEQVASLKDTIARKDMEIEQLQLLKSKSPNSMTDRNGSNLLRQSTSSTGLSSLPVASQQNQQLSGSVEAEAEDNASDDGCSVGETEYSPAGASETSAERAHKAPSRITRFFLTKNGQPSTSRPKPREVVPKTQGSMRPGTAQATGGSLAKPSKRR</sequence>
<evidence type="ECO:0000255" key="1"/>
<evidence type="ECO:0000255" key="2">
    <source>
        <dbReference type="PROSITE-ProRule" id="PRU00044"/>
    </source>
</evidence>
<evidence type="ECO:0000255" key="3">
    <source>
        <dbReference type="PROSITE-ProRule" id="PRU00283"/>
    </source>
</evidence>
<evidence type="ECO:0000256" key="4">
    <source>
        <dbReference type="SAM" id="MobiDB-lite"/>
    </source>
</evidence>
<evidence type="ECO:0000303" key="5">
    <source>
    </source>
</evidence>
<evidence type="ECO:0000305" key="6"/>
<evidence type="ECO:0000312" key="7">
    <source>
        <dbReference type="EMBL" id="BAD87516.1"/>
    </source>
</evidence>
<evidence type="ECO:0000312" key="8">
    <source>
        <dbReference type="EMBL" id="BAD87915.1"/>
    </source>
</evidence>
<evidence type="ECO:0000312" key="9">
    <source>
        <dbReference type="EMBL" id="BAS74302.1"/>
    </source>
</evidence>
<accession>Q5JKW1</accession>